<feature type="chain" id="PRO_0000275256" description="Chaperonin GroEL, chloroplastic">
    <location>
        <begin position="1"/>
        <end position="531"/>
    </location>
</feature>
<feature type="binding site" evidence="1">
    <location>
        <begin position="29"/>
        <end position="32"/>
    </location>
    <ligand>
        <name>ATP</name>
        <dbReference type="ChEBI" id="CHEBI:30616"/>
    </ligand>
</feature>
<feature type="binding site" evidence="1">
    <location>
        <begin position="86"/>
        <end position="90"/>
    </location>
    <ligand>
        <name>ATP</name>
        <dbReference type="ChEBI" id="CHEBI:30616"/>
    </ligand>
</feature>
<feature type="binding site" evidence="1">
    <location>
        <position position="415"/>
    </location>
    <ligand>
        <name>ATP</name>
        <dbReference type="ChEBI" id="CHEBI:30616"/>
    </ligand>
</feature>
<feature type="binding site" evidence="1">
    <location>
        <begin position="481"/>
        <end position="483"/>
    </location>
    <ligand>
        <name>ATP</name>
        <dbReference type="ChEBI" id="CHEBI:30616"/>
    </ligand>
</feature>
<feature type="binding site" evidence="1">
    <location>
        <position position="497"/>
    </location>
    <ligand>
        <name>ATP</name>
        <dbReference type="ChEBI" id="CHEBI:30616"/>
    </ligand>
</feature>
<protein>
    <recommendedName>
        <fullName evidence="1">Chaperonin GroEL, chloroplastic</fullName>
        <ecNumber evidence="1">5.6.1.7</ecNumber>
    </recommendedName>
    <alternativeName>
        <fullName evidence="1">60 kDa chaperonin</fullName>
    </alternativeName>
    <alternativeName>
        <fullName evidence="1">Chaperonin-60</fullName>
        <shortName evidence="1">Cpn60</shortName>
    </alternativeName>
</protein>
<sequence length="531" mass="57360">MAKKILYQDNARRALERGMEIMVEAVSVTLGPKGRNVVLEKTYGSPQIVNDGVTIAKEISLEDHIENTGVSLIRQAAAKTNDVAGDGTTTATVLAYAMVKEGLKNVAAGANPISIKLGMEKATQYLVMQINEFAQPVEDIQSIKQVASISAGNDDVIGALIADALAKVGKEGVISLEEGKGIVTELEITEGMKLEKGFISPYFITDTEKMEVCFENPYILLTDKRITLVQQDLLPILEQITKTKRPLLIIAEDVEKEALATLILNKLRGIVNVVAIRAPGFGELRKLMLQDIAVLTGGTVITQDAGLSLDNIQVNLLGQARRIIVNKDTTTIVGDGLEIENIKARCEQLRKQVNIAETSYEKEKLQDRIAKLSGGIAVIRVGAVTETEMKDKKLRLEDAINATRAAVEEGIVPGGGATLAHLSENLVTWSKTNLKEDELIGALIISRAIVAPLKRIAENAGINGPVVIGKVQEQEFEIGYNAAKNLFGNMYDEGVVDPAKVTRSGLQNATSIASMILTTECIIVDDIEKVK</sequence>
<evidence type="ECO:0000255" key="1">
    <source>
        <dbReference type="HAMAP-Rule" id="MF_00600"/>
    </source>
</evidence>
<comment type="function">
    <text evidence="1">Together with its co-chaperonin GroES, plays an essential role in assisting protein folding. The GroEL-GroES system forms a nano-cage that allows encapsulation of the non-native substrate proteins and provides a physical environment optimized to promote and accelerate protein folding.</text>
</comment>
<comment type="catalytic activity">
    <reaction evidence="1">
        <text>ATP + H2O + a folded polypeptide = ADP + phosphate + an unfolded polypeptide.</text>
        <dbReference type="EC" id="5.6.1.7"/>
    </reaction>
</comment>
<comment type="subunit">
    <text evidence="1">Forms a cylinder of 14 subunits composed of two heptameric rings stacked back-to-back. Interacts with the co-chaperonin GroES.</text>
</comment>
<comment type="subcellular location">
    <subcellularLocation>
        <location evidence="1">Plastid</location>
        <location evidence="1">Chloroplast</location>
    </subcellularLocation>
</comment>
<comment type="similarity">
    <text evidence="1">Belongs to the chaperonin (HSP60) family.</text>
</comment>
<name>CH60_THAPS</name>
<proteinExistence type="inferred from homology"/>
<dbReference type="EC" id="5.6.1.7" evidence="1"/>
<dbReference type="EMBL" id="EF067921">
    <property type="protein sequence ID" value="ABK20805.1"/>
    <property type="molecule type" value="Genomic_DNA"/>
</dbReference>
<dbReference type="RefSeq" id="YP_874582.1">
    <property type="nucleotide sequence ID" value="NC_008589.1"/>
</dbReference>
<dbReference type="SMR" id="A0T0X0"/>
<dbReference type="STRING" id="35128.A0T0X0"/>
<dbReference type="GeneID" id="4524721"/>
<dbReference type="InParanoid" id="A0T0X0"/>
<dbReference type="GO" id="GO:0009507">
    <property type="term" value="C:chloroplast"/>
    <property type="evidence" value="ECO:0007669"/>
    <property type="project" value="UniProtKB-SubCell"/>
</dbReference>
<dbReference type="GO" id="GO:0005524">
    <property type="term" value="F:ATP binding"/>
    <property type="evidence" value="ECO:0007669"/>
    <property type="project" value="UniProtKB-UniRule"/>
</dbReference>
<dbReference type="GO" id="GO:0140662">
    <property type="term" value="F:ATP-dependent protein folding chaperone"/>
    <property type="evidence" value="ECO:0007669"/>
    <property type="project" value="InterPro"/>
</dbReference>
<dbReference type="GO" id="GO:0016853">
    <property type="term" value="F:isomerase activity"/>
    <property type="evidence" value="ECO:0007669"/>
    <property type="project" value="UniProtKB-KW"/>
</dbReference>
<dbReference type="GO" id="GO:0051082">
    <property type="term" value="F:unfolded protein binding"/>
    <property type="evidence" value="ECO:0007669"/>
    <property type="project" value="UniProtKB-UniRule"/>
</dbReference>
<dbReference type="GO" id="GO:0006457">
    <property type="term" value="P:protein folding"/>
    <property type="evidence" value="ECO:0000318"/>
    <property type="project" value="GO_Central"/>
</dbReference>
<dbReference type="GO" id="GO:0042026">
    <property type="term" value="P:protein refolding"/>
    <property type="evidence" value="ECO:0007669"/>
    <property type="project" value="UniProtKB-UniRule"/>
</dbReference>
<dbReference type="CDD" id="cd03344">
    <property type="entry name" value="GroEL"/>
    <property type="match status" value="1"/>
</dbReference>
<dbReference type="FunFam" id="3.50.7.10:FF:000001">
    <property type="entry name" value="60 kDa chaperonin"/>
    <property type="match status" value="1"/>
</dbReference>
<dbReference type="Gene3D" id="3.50.7.10">
    <property type="entry name" value="GroEL"/>
    <property type="match status" value="1"/>
</dbReference>
<dbReference type="Gene3D" id="1.10.560.10">
    <property type="entry name" value="GroEL-like equatorial domain"/>
    <property type="match status" value="1"/>
</dbReference>
<dbReference type="Gene3D" id="3.30.260.10">
    <property type="entry name" value="TCP-1-like chaperonin intermediate domain"/>
    <property type="match status" value="1"/>
</dbReference>
<dbReference type="HAMAP" id="MF_00600">
    <property type="entry name" value="CH60"/>
    <property type="match status" value="1"/>
</dbReference>
<dbReference type="InterPro" id="IPR018370">
    <property type="entry name" value="Chaperonin_Cpn60_CS"/>
</dbReference>
<dbReference type="InterPro" id="IPR001844">
    <property type="entry name" value="Cpn60/GroEL"/>
</dbReference>
<dbReference type="InterPro" id="IPR002423">
    <property type="entry name" value="Cpn60/GroEL/TCP-1"/>
</dbReference>
<dbReference type="InterPro" id="IPR027409">
    <property type="entry name" value="GroEL-like_apical_dom_sf"/>
</dbReference>
<dbReference type="InterPro" id="IPR027413">
    <property type="entry name" value="GROEL-like_equatorial_sf"/>
</dbReference>
<dbReference type="InterPro" id="IPR027410">
    <property type="entry name" value="TCP-1-like_intermed_sf"/>
</dbReference>
<dbReference type="NCBIfam" id="TIGR02348">
    <property type="entry name" value="GroEL"/>
    <property type="match status" value="1"/>
</dbReference>
<dbReference type="NCBIfam" id="NF000592">
    <property type="entry name" value="PRK00013.1"/>
    <property type="match status" value="1"/>
</dbReference>
<dbReference type="NCBIfam" id="NF009487">
    <property type="entry name" value="PRK12849.1"/>
    <property type="match status" value="1"/>
</dbReference>
<dbReference type="NCBIfam" id="NF009488">
    <property type="entry name" value="PRK12850.1"/>
    <property type="match status" value="1"/>
</dbReference>
<dbReference type="NCBIfam" id="NF009489">
    <property type="entry name" value="PRK12851.1"/>
    <property type="match status" value="1"/>
</dbReference>
<dbReference type="PANTHER" id="PTHR45633">
    <property type="entry name" value="60 KDA HEAT SHOCK PROTEIN, MITOCHONDRIAL"/>
    <property type="match status" value="1"/>
</dbReference>
<dbReference type="Pfam" id="PF00118">
    <property type="entry name" value="Cpn60_TCP1"/>
    <property type="match status" value="1"/>
</dbReference>
<dbReference type="PRINTS" id="PR00298">
    <property type="entry name" value="CHAPERONIN60"/>
</dbReference>
<dbReference type="SUPFAM" id="SSF52029">
    <property type="entry name" value="GroEL apical domain-like"/>
    <property type="match status" value="1"/>
</dbReference>
<dbReference type="SUPFAM" id="SSF48592">
    <property type="entry name" value="GroEL equatorial domain-like"/>
    <property type="match status" value="1"/>
</dbReference>
<dbReference type="SUPFAM" id="SSF54849">
    <property type="entry name" value="GroEL-intermediate domain like"/>
    <property type="match status" value="1"/>
</dbReference>
<dbReference type="PROSITE" id="PS00296">
    <property type="entry name" value="CHAPERONINS_CPN60"/>
    <property type="match status" value="1"/>
</dbReference>
<keyword id="KW-0067">ATP-binding</keyword>
<keyword id="KW-0143">Chaperone</keyword>
<keyword id="KW-0150">Chloroplast</keyword>
<keyword id="KW-0413">Isomerase</keyword>
<keyword id="KW-0547">Nucleotide-binding</keyword>
<keyword id="KW-0934">Plastid</keyword>
<gene>
    <name evidence="1" type="primary">groEL</name>
    <name evidence="1" type="synonym">groL</name>
</gene>
<accession>A0T0X0</accession>
<reference key="1">
    <citation type="journal article" date="2007" name="Mol. Genet. Genomics">
        <title>Chloroplast genomes of the diatoms Phaeodactylum tricornutum and Thalassiosira pseudonana: comparison with other plastid genomes of the red lineage.</title>
        <authorList>
            <person name="Oudot-Le Secq M.-P."/>
            <person name="Grimwood J."/>
            <person name="Shapiro H."/>
            <person name="Armbrust E.V."/>
            <person name="Bowler C."/>
            <person name="Green B.R."/>
        </authorList>
    </citation>
    <scope>NUCLEOTIDE SEQUENCE [LARGE SCALE GENOMIC DNA]</scope>
    <source>
        <strain>CCMP1335 / NEPCC58 / CCAP 1085/12</strain>
    </source>
</reference>
<geneLocation type="chloroplast"/>
<organism>
    <name type="scientific">Thalassiosira pseudonana</name>
    <name type="common">Marine diatom</name>
    <name type="synonym">Cyclotella nana</name>
    <dbReference type="NCBI Taxonomy" id="35128"/>
    <lineage>
        <taxon>Eukaryota</taxon>
        <taxon>Sar</taxon>
        <taxon>Stramenopiles</taxon>
        <taxon>Ochrophyta</taxon>
        <taxon>Bacillariophyta</taxon>
        <taxon>Coscinodiscophyceae</taxon>
        <taxon>Thalassiosirophycidae</taxon>
        <taxon>Thalassiosirales</taxon>
        <taxon>Thalassiosiraceae</taxon>
        <taxon>Thalassiosira</taxon>
    </lineage>
</organism>